<sequence>MATINQLVRKPRSMKVAKSNVPALEACPQKRGVCTRVYTTTPKKPNSALRKVCRVRLTNGFEVTSYIGGEGHNLQEHSVILIRGGRVKDLPGVRYHTVRGALDCSGVKDRKQSRSKYGVKKQKA</sequence>
<gene>
    <name evidence="2" type="primary">rpsL</name>
    <name type="ordered locus">YPDSF_0125</name>
</gene>
<evidence type="ECO:0000250" key="1"/>
<evidence type="ECO:0000255" key="2">
    <source>
        <dbReference type="HAMAP-Rule" id="MF_00403"/>
    </source>
</evidence>
<evidence type="ECO:0000305" key="3"/>
<name>RS12_YERPP</name>
<feature type="chain" id="PRO_0000296045" description="Small ribosomal subunit protein uS12">
    <location>
        <begin position="1"/>
        <end position="124"/>
    </location>
</feature>
<feature type="modified residue" description="3-methylthioaspartic acid" evidence="1">
    <location>
        <position position="89"/>
    </location>
</feature>
<protein>
    <recommendedName>
        <fullName evidence="2">Small ribosomal subunit protein uS12</fullName>
    </recommendedName>
    <alternativeName>
        <fullName evidence="3">30S ribosomal protein S12</fullName>
    </alternativeName>
</protein>
<proteinExistence type="inferred from homology"/>
<organism>
    <name type="scientific">Yersinia pestis (strain Pestoides F)</name>
    <dbReference type="NCBI Taxonomy" id="386656"/>
    <lineage>
        <taxon>Bacteria</taxon>
        <taxon>Pseudomonadati</taxon>
        <taxon>Pseudomonadota</taxon>
        <taxon>Gammaproteobacteria</taxon>
        <taxon>Enterobacterales</taxon>
        <taxon>Yersiniaceae</taxon>
        <taxon>Yersinia</taxon>
    </lineage>
</organism>
<comment type="function">
    <text evidence="2">With S4 and S5 plays an important role in translational accuracy.</text>
</comment>
<comment type="function">
    <text evidence="2">Interacts with and stabilizes bases of the 16S rRNA that are involved in tRNA selection in the A site and with the mRNA backbone. Located at the interface of the 30S and 50S subunits, it traverses the body of the 30S subunit contacting proteins on the other side and probably holding the rRNA structure together. The combined cluster of proteins S8, S12 and S17 appears to hold together the shoulder and platform of the 30S subunit.</text>
</comment>
<comment type="subunit">
    <text evidence="2">Part of the 30S ribosomal subunit. Contacts proteins S8 and S17. May interact with IF1 in the 30S initiation complex.</text>
</comment>
<comment type="similarity">
    <text evidence="2">Belongs to the universal ribosomal protein uS12 family.</text>
</comment>
<accession>A4TGY4</accession>
<dbReference type="EMBL" id="CP000668">
    <property type="protein sequence ID" value="ABP38547.1"/>
    <property type="molecule type" value="Genomic_DNA"/>
</dbReference>
<dbReference type="RefSeq" id="WP_011906134.1">
    <property type="nucleotide sequence ID" value="NZ_CP009715.1"/>
</dbReference>
<dbReference type="SMR" id="A4TGY4"/>
<dbReference type="KEGG" id="ypp:YPDSF_0125"/>
<dbReference type="PATRIC" id="fig|386656.14.peg.442"/>
<dbReference type="GO" id="GO:0015935">
    <property type="term" value="C:small ribosomal subunit"/>
    <property type="evidence" value="ECO:0007669"/>
    <property type="project" value="InterPro"/>
</dbReference>
<dbReference type="GO" id="GO:0019843">
    <property type="term" value="F:rRNA binding"/>
    <property type="evidence" value="ECO:0007669"/>
    <property type="project" value="UniProtKB-UniRule"/>
</dbReference>
<dbReference type="GO" id="GO:0003735">
    <property type="term" value="F:structural constituent of ribosome"/>
    <property type="evidence" value="ECO:0007669"/>
    <property type="project" value="InterPro"/>
</dbReference>
<dbReference type="GO" id="GO:0000049">
    <property type="term" value="F:tRNA binding"/>
    <property type="evidence" value="ECO:0007669"/>
    <property type="project" value="UniProtKB-UniRule"/>
</dbReference>
<dbReference type="GO" id="GO:0006412">
    <property type="term" value="P:translation"/>
    <property type="evidence" value="ECO:0007669"/>
    <property type="project" value="UniProtKB-UniRule"/>
</dbReference>
<dbReference type="CDD" id="cd03368">
    <property type="entry name" value="Ribosomal_S12"/>
    <property type="match status" value="1"/>
</dbReference>
<dbReference type="FunFam" id="2.40.50.140:FF:000001">
    <property type="entry name" value="30S ribosomal protein S12"/>
    <property type="match status" value="1"/>
</dbReference>
<dbReference type="Gene3D" id="2.40.50.140">
    <property type="entry name" value="Nucleic acid-binding proteins"/>
    <property type="match status" value="1"/>
</dbReference>
<dbReference type="HAMAP" id="MF_00403_B">
    <property type="entry name" value="Ribosomal_uS12_B"/>
    <property type="match status" value="1"/>
</dbReference>
<dbReference type="InterPro" id="IPR012340">
    <property type="entry name" value="NA-bd_OB-fold"/>
</dbReference>
<dbReference type="InterPro" id="IPR006032">
    <property type="entry name" value="Ribosomal_uS12"/>
</dbReference>
<dbReference type="InterPro" id="IPR005679">
    <property type="entry name" value="Ribosomal_uS12_bac"/>
</dbReference>
<dbReference type="NCBIfam" id="TIGR00981">
    <property type="entry name" value="rpsL_bact"/>
    <property type="match status" value="1"/>
</dbReference>
<dbReference type="PANTHER" id="PTHR11652">
    <property type="entry name" value="30S RIBOSOMAL PROTEIN S12 FAMILY MEMBER"/>
    <property type="match status" value="1"/>
</dbReference>
<dbReference type="Pfam" id="PF00164">
    <property type="entry name" value="Ribosom_S12_S23"/>
    <property type="match status" value="1"/>
</dbReference>
<dbReference type="PIRSF" id="PIRSF002133">
    <property type="entry name" value="Ribosomal_S12/S23"/>
    <property type="match status" value="1"/>
</dbReference>
<dbReference type="PRINTS" id="PR01034">
    <property type="entry name" value="RIBOSOMALS12"/>
</dbReference>
<dbReference type="SUPFAM" id="SSF50249">
    <property type="entry name" value="Nucleic acid-binding proteins"/>
    <property type="match status" value="1"/>
</dbReference>
<dbReference type="PROSITE" id="PS00055">
    <property type="entry name" value="RIBOSOMAL_S12"/>
    <property type="match status" value="1"/>
</dbReference>
<reference key="1">
    <citation type="submission" date="2007-02" db="EMBL/GenBank/DDBJ databases">
        <title>Complete sequence of chromosome of Yersinia pestis Pestoides F.</title>
        <authorList>
            <consortium name="US DOE Joint Genome Institute"/>
            <person name="Copeland A."/>
            <person name="Lucas S."/>
            <person name="Lapidus A."/>
            <person name="Barry K."/>
            <person name="Detter J.C."/>
            <person name="Glavina del Rio T."/>
            <person name="Hammon N."/>
            <person name="Israni S."/>
            <person name="Dalin E."/>
            <person name="Tice H."/>
            <person name="Pitluck S."/>
            <person name="Di Bartolo G."/>
            <person name="Chain P."/>
            <person name="Malfatti S."/>
            <person name="Shin M."/>
            <person name="Vergez L."/>
            <person name="Schmutz J."/>
            <person name="Larimer F."/>
            <person name="Land M."/>
            <person name="Hauser L."/>
            <person name="Worsham P."/>
            <person name="Chu M."/>
            <person name="Bearden S."/>
            <person name="Garcia E."/>
            <person name="Richardson P."/>
        </authorList>
    </citation>
    <scope>NUCLEOTIDE SEQUENCE [LARGE SCALE GENOMIC DNA]</scope>
    <source>
        <strain>Pestoides F</strain>
    </source>
</reference>
<keyword id="KW-0488">Methylation</keyword>
<keyword id="KW-0687">Ribonucleoprotein</keyword>
<keyword id="KW-0689">Ribosomal protein</keyword>
<keyword id="KW-0694">RNA-binding</keyword>
<keyword id="KW-0699">rRNA-binding</keyword>
<keyword id="KW-0820">tRNA-binding</keyword>